<gene>
    <name evidence="1" type="primary">dapA</name>
    <name type="ordered locus">ECED1_2913</name>
</gene>
<sequence>MFTGSIVAIVTPMDEKGNVCRASLKKLIDYHVASGTSAIVSVGTTGESATLNHDEHADVVMMTLELADGRIPVIAGTGANATAEAISLTQRFNDSGIVGCLTVTPYYNRPSQEGLYQHFKAIAEHTDLPQILYNVPSRTGCDLLPETVGRLAKVKNIIGIKEATGNLTRVNQIKELVSDDFVLLSGDDASALDFMQLGGHGVISVTANVAARDMAQMCKLAAEGHFAEARVINQRLMPLHNKLFVEPNPIPVKWACKELGLVATDTLRLPMTPITDSGRETVRAALKHAGLL</sequence>
<accession>B7MYB7</accession>
<dbReference type="EC" id="4.3.3.7" evidence="1"/>
<dbReference type="EMBL" id="CU928162">
    <property type="protein sequence ID" value="CAR09083.2"/>
    <property type="molecule type" value="Genomic_DNA"/>
</dbReference>
<dbReference type="RefSeq" id="WP_001295469.1">
    <property type="nucleotide sequence ID" value="NC_011745.1"/>
</dbReference>
<dbReference type="SMR" id="B7MYB7"/>
<dbReference type="GeneID" id="93774660"/>
<dbReference type="KEGG" id="ecq:ECED1_2913"/>
<dbReference type="HOGENOM" id="CLU_049343_7_1_6"/>
<dbReference type="UniPathway" id="UPA00034">
    <property type="reaction ID" value="UER00017"/>
</dbReference>
<dbReference type="Proteomes" id="UP000000748">
    <property type="component" value="Chromosome"/>
</dbReference>
<dbReference type="GO" id="GO:0005829">
    <property type="term" value="C:cytosol"/>
    <property type="evidence" value="ECO:0007669"/>
    <property type="project" value="TreeGrafter"/>
</dbReference>
<dbReference type="GO" id="GO:0008840">
    <property type="term" value="F:4-hydroxy-tetrahydrodipicolinate synthase activity"/>
    <property type="evidence" value="ECO:0007669"/>
    <property type="project" value="UniProtKB-UniRule"/>
</dbReference>
<dbReference type="GO" id="GO:0019877">
    <property type="term" value="P:diaminopimelate biosynthetic process"/>
    <property type="evidence" value="ECO:0007669"/>
    <property type="project" value="UniProtKB-UniRule"/>
</dbReference>
<dbReference type="GO" id="GO:0009089">
    <property type="term" value="P:lysine biosynthetic process via diaminopimelate"/>
    <property type="evidence" value="ECO:0007669"/>
    <property type="project" value="UniProtKB-UniRule"/>
</dbReference>
<dbReference type="CDD" id="cd00950">
    <property type="entry name" value="DHDPS"/>
    <property type="match status" value="1"/>
</dbReference>
<dbReference type="FunFam" id="3.20.20.70:FF:000046">
    <property type="entry name" value="4-hydroxy-tetrahydrodipicolinate synthase"/>
    <property type="match status" value="1"/>
</dbReference>
<dbReference type="Gene3D" id="3.20.20.70">
    <property type="entry name" value="Aldolase class I"/>
    <property type="match status" value="1"/>
</dbReference>
<dbReference type="HAMAP" id="MF_00418">
    <property type="entry name" value="DapA"/>
    <property type="match status" value="1"/>
</dbReference>
<dbReference type="InterPro" id="IPR013785">
    <property type="entry name" value="Aldolase_TIM"/>
</dbReference>
<dbReference type="InterPro" id="IPR005263">
    <property type="entry name" value="DapA"/>
</dbReference>
<dbReference type="InterPro" id="IPR002220">
    <property type="entry name" value="DapA-like"/>
</dbReference>
<dbReference type="InterPro" id="IPR020625">
    <property type="entry name" value="Schiff_base-form_aldolases_AS"/>
</dbReference>
<dbReference type="InterPro" id="IPR020624">
    <property type="entry name" value="Schiff_base-form_aldolases_CS"/>
</dbReference>
<dbReference type="NCBIfam" id="TIGR00674">
    <property type="entry name" value="dapA"/>
    <property type="match status" value="1"/>
</dbReference>
<dbReference type="PANTHER" id="PTHR12128:SF66">
    <property type="entry name" value="4-HYDROXY-2-OXOGLUTARATE ALDOLASE, MITOCHONDRIAL"/>
    <property type="match status" value="1"/>
</dbReference>
<dbReference type="PANTHER" id="PTHR12128">
    <property type="entry name" value="DIHYDRODIPICOLINATE SYNTHASE"/>
    <property type="match status" value="1"/>
</dbReference>
<dbReference type="Pfam" id="PF00701">
    <property type="entry name" value="DHDPS"/>
    <property type="match status" value="1"/>
</dbReference>
<dbReference type="PIRSF" id="PIRSF001365">
    <property type="entry name" value="DHDPS"/>
    <property type="match status" value="1"/>
</dbReference>
<dbReference type="PRINTS" id="PR00146">
    <property type="entry name" value="DHPICSNTHASE"/>
</dbReference>
<dbReference type="SMART" id="SM01130">
    <property type="entry name" value="DHDPS"/>
    <property type="match status" value="1"/>
</dbReference>
<dbReference type="SUPFAM" id="SSF51569">
    <property type="entry name" value="Aldolase"/>
    <property type="match status" value="1"/>
</dbReference>
<dbReference type="PROSITE" id="PS00665">
    <property type="entry name" value="DHDPS_1"/>
    <property type="match status" value="1"/>
</dbReference>
<dbReference type="PROSITE" id="PS00666">
    <property type="entry name" value="DHDPS_2"/>
    <property type="match status" value="1"/>
</dbReference>
<feature type="chain" id="PRO_1000134867" description="4-hydroxy-tetrahydrodipicolinate synthase">
    <location>
        <begin position="1"/>
        <end position="292"/>
    </location>
</feature>
<feature type="active site" description="Proton donor/acceptor" evidence="1">
    <location>
        <position position="133"/>
    </location>
</feature>
<feature type="active site" description="Schiff-base intermediate with substrate" evidence="1">
    <location>
        <position position="161"/>
    </location>
</feature>
<feature type="binding site" evidence="1">
    <location>
        <position position="45"/>
    </location>
    <ligand>
        <name>pyruvate</name>
        <dbReference type="ChEBI" id="CHEBI:15361"/>
    </ligand>
</feature>
<feature type="binding site" evidence="1">
    <location>
        <position position="203"/>
    </location>
    <ligand>
        <name>pyruvate</name>
        <dbReference type="ChEBI" id="CHEBI:15361"/>
    </ligand>
</feature>
<feature type="site" description="Part of a proton relay during catalysis" evidence="1">
    <location>
        <position position="44"/>
    </location>
</feature>
<feature type="site" description="Part of a proton relay during catalysis" evidence="1">
    <location>
        <position position="107"/>
    </location>
</feature>
<organism>
    <name type="scientific">Escherichia coli O81 (strain ED1a)</name>
    <dbReference type="NCBI Taxonomy" id="585397"/>
    <lineage>
        <taxon>Bacteria</taxon>
        <taxon>Pseudomonadati</taxon>
        <taxon>Pseudomonadota</taxon>
        <taxon>Gammaproteobacteria</taxon>
        <taxon>Enterobacterales</taxon>
        <taxon>Enterobacteriaceae</taxon>
        <taxon>Escherichia</taxon>
    </lineage>
</organism>
<name>DAPA_ECO81</name>
<keyword id="KW-0028">Amino-acid biosynthesis</keyword>
<keyword id="KW-0963">Cytoplasm</keyword>
<keyword id="KW-0220">Diaminopimelate biosynthesis</keyword>
<keyword id="KW-0456">Lyase</keyword>
<keyword id="KW-0457">Lysine biosynthesis</keyword>
<keyword id="KW-0704">Schiff base</keyword>
<protein>
    <recommendedName>
        <fullName evidence="1">4-hydroxy-tetrahydrodipicolinate synthase</fullName>
        <shortName evidence="1">HTPA synthase</shortName>
        <ecNumber evidence="1">4.3.3.7</ecNumber>
    </recommendedName>
</protein>
<proteinExistence type="inferred from homology"/>
<comment type="function">
    <text evidence="1">Catalyzes the condensation of (S)-aspartate-beta-semialdehyde [(S)-ASA] and pyruvate to 4-hydroxy-tetrahydrodipicolinate (HTPA).</text>
</comment>
<comment type="catalytic activity">
    <reaction evidence="1">
        <text>L-aspartate 4-semialdehyde + pyruvate = (2S,4S)-4-hydroxy-2,3,4,5-tetrahydrodipicolinate + H2O + H(+)</text>
        <dbReference type="Rhea" id="RHEA:34171"/>
        <dbReference type="ChEBI" id="CHEBI:15361"/>
        <dbReference type="ChEBI" id="CHEBI:15377"/>
        <dbReference type="ChEBI" id="CHEBI:15378"/>
        <dbReference type="ChEBI" id="CHEBI:67139"/>
        <dbReference type="ChEBI" id="CHEBI:537519"/>
        <dbReference type="EC" id="4.3.3.7"/>
    </reaction>
</comment>
<comment type="pathway">
    <text evidence="1">Amino-acid biosynthesis; L-lysine biosynthesis via DAP pathway; (S)-tetrahydrodipicolinate from L-aspartate: step 3/4.</text>
</comment>
<comment type="subunit">
    <text evidence="1">Homotetramer; dimer of dimers.</text>
</comment>
<comment type="subcellular location">
    <subcellularLocation>
        <location evidence="1">Cytoplasm</location>
    </subcellularLocation>
</comment>
<comment type="similarity">
    <text evidence="1">Belongs to the DapA family.</text>
</comment>
<comment type="caution">
    <text evidence="2">Was originally thought to be a dihydrodipicolinate synthase (DHDPS), catalyzing the condensation of (S)-aspartate-beta-semialdehyde [(S)-ASA] and pyruvate to dihydrodipicolinate (DHDP). However, it was shown in E.coli that the product of the enzymatic reaction is not dihydrodipicolinate but in fact (4S)-4-hydroxy-2,3,4,5-tetrahydro-(2S)-dipicolinic acid (HTPA), and that the consecutive dehydration reaction leading to DHDP is not spontaneous but catalyzed by DapB.</text>
</comment>
<reference key="1">
    <citation type="journal article" date="2009" name="PLoS Genet.">
        <title>Organised genome dynamics in the Escherichia coli species results in highly diverse adaptive paths.</title>
        <authorList>
            <person name="Touchon M."/>
            <person name="Hoede C."/>
            <person name="Tenaillon O."/>
            <person name="Barbe V."/>
            <person name="Baeriswyl S."/>
            <person name="Bidet P."/>
            <person name="Bingen E."/>
            <person name="Bonacorsi S."/>
            <person name="Bouchier C."/>
            <person name="Bouvet O."/>
            <person name="Calteau A."/>
            <person name="Chiapello H."/>
            <person name="Clermont O."/>
            <person name="Cruveiller S."/>
            <person name="Danchin A."/>
            <person name="Diard M."/>
            <person name="Dossat C."/>
            <person name="Karoui M.E."/>
            <person name="Frapy E."/>
            <person name="Garry L."/>
            <person name="Ghigo J.M."/>
            <person name="Gilles A.M."/>
            <person name="Johnson J."/>
            <person name="Le Bouguenec C."/>
            <person name="Lescat M."/>
            <person name="Mangenot S."/>
            <person name="Martinez-Jehanne V."/>
            <person name="Matic I."/>
            <person name="Nassif X."/>
            <person name="Oztas S."/>
            <person name="Petit M.A."/>
            <person name="Pichon C."/>
            <person name="Rouy Z."/>
            <person name="Ruf C.S."/>
            <person name="Schneider D."/>
            <person name="Tourret J."/>
            <person name="Vacherie B."/>
            <person name="Vallenet D."/>
            <person name="Medigue C."/>
            <person name="Rocha E.P.C."/>
            <person name="Denamur E."/>
        </authorList>
    </citation>
    <scope>NUCLEOTIDE SEQUENCE [LARGE SCALE GENOMIC DNA]</scope>
    <source>
        <strain>ED1a</strain>
    </source>
</reference>
<evidence type="ECO:0000255" key="1">
    <source>
        <dbReference type="HAMAP-Rule" id="MF_00418"/>
    </source>
</evidence>
<evidence type="ECO:0000305" key="2"/>